<evidence type="ECO:0000269" key="1">
    <source>
    </source>
</evidence>
<evidence type="ECO:0000269" key="2">
    <source>
    </source>
</evidence>
<evidence type="ECO:0000269" key="3">
    <source>
    </source>
</evidence>
<name>PET54_YEAST</name>
<reference key="1">
    <citation type="journal article" date="1989" name="Genetics">
        <title>The PET54 gene of Saccharomyces cerevisiae: characterization of a nuclear gene encoding a mitochondrial translational activator and subcellular localization of its product.</title>
        <authorList>
            <person name="Costanzo M.C."/>
            <person name="Seaver E.C."/>
            <person name="Fox T.D."/>
        </authorList>
    </citation>
    <scope>NUCLEOTIDE SEQUENCE [GENOMIC DNA]</scope>
</reference>
<reference key="2">
    <citation type="journal article" date="1996" name="Yeast">
        <title>Sequence analysis of the 43 kb CRM1-YLM9-PET54-DIE2-SMI1-PHO81-YHB4-PFK1 region from the right arm of Saccharomyces cerevisiae chromosome VII.</title>
        <authorList>
            <person name="van der Aart Q.J.M."/>
            <person name="Kleine K."/>
            <person name="Steensma H.Y."/>
        </authorList>
    </citation>
    <scope>NUCLEOTIDE SEQUENCE [GENOMIC DNA]</scope>
    <source>
        <strain>ATCC 204508 / S288c</strain>
    </source>
</reference>
<reference key="3">
    <citation type="journal article" date="1997" name="Nature">
        <title>The nucleotide sequence of Saccharomyces cerevisiae chromosome VII.</title>
        <authorList>
            <person name="Tettelin H."/>
            <person name="Agostoni-Carbone M.L."/>
            <person name="Albermann K."/>
            <person name="Albers M."/>
            <person name="Arroyo J."/>
            <person name="Backes U."/>
            <person name="Barreiros T."/>
            <person name="Bertani I."/>
            <person name="Bjourson A.J."/>
            <person name="Brueckner M."/>
            <person name="Bruschi C.V."/>
            <person name="Carignani G."/>
            <person name="Castagnoli L."/>
            <person name="Cerdan E."/>
            <person name="Clemente M.L."/>
            <person name="Coblenz A."/>
            <person name="Coglievina M."/>
            <person name="Coissac E."/>
            <person name="Defoor E."/>
            <person name="Del Bino S."/>
            <person name="Delius H."/>
            <person name="Delneri D."/>
            <person name="de Wergifosse P."/>
            <person name="Dujon B."/>
            <person name="Durand P."/>
            <person name="Entian K.-D."/>
            <person name="Eraso P."/>
            <person name="Escribano V."/>
            <person name="Fabiani L."/>
            <person name="Fartmann B."/>
            <person name="Feroli F."/>
            <person name="Feuermann M."/>
            <person name="Frontali L."/>
            <person name="Garcia-Gonzalez M."/>
            <person name="Garcia-Saez M.I."/>
            <person name="Goffeau A."/>
            <person name="Guerreiro P."/>
            <person name="Hani J."/>
            <person name="Hansen M."/>
            <person name="Hebling U."/>
            <person name="Hernandez K."/>
            <person name="Heumann K."/>
            <person name="Hilger F."/>
            <person name="Hofmann B."/>
            <person name="Indge K.J."/>
            <person name="James C.M."/>
            <person name="Klima R."/>
            <person name="Koetter P."/>
            <person name="Kramer B."/>
            <person name="Kramer W."/>
            <person name="Lauquin G."/>
            <person name="Leuther H."/>
            <person name="Louis E.J."/>
            <person name="Maillier E."/>
            <person name="Marconi A."/>
            <person name="Martegani E."/>
            <person name="Mazon M.J."/>
            <person name="Mazzoni C."/>
            <person name="McReynolds A.D.K."/>
            <person name="Melchioretto P."/>
            <person name="Mewes H.-W."/>
            <person name="Minenkova O."/>
            <person name="Mueller-Auer S."/>
            <person name="Nawrocki A."/>
            <person name="Netter P."/>
            <person name="Neu R."/>
            <person name="Nombela C."/>
            <person name="Oliver S.G."/>
            <person name="Panzeri L."/>
            <person name="Paoluzi S."/>
            <person name="Plevani P."/>
            <person name="Portetelle D."/>
            <person name="Portillo F."/>
            <person name="Potier S."/>
            <person name="Purnelle B."/>
            <person name="Rieger M."/>
            <person name="Riles L."/>
            <person name="Rinaldi T."/>
            <person name="Robben J."/>
            <person name="Rodrigues-Pousada C."/>
            <person name="Rodriguez-Belmonte E."/>
            <person name="Rodriguez-Torres A.M."/>
            <person name="Rose M."/>
            <person name="Ruzzi M."/>
            <person name="Saliola M."/>
            <person name="Sanchez-Perez M."/>
            <person name="Schaefer B."/>
            <person name="Schaefer M."/>
            <person name="Scharfe M."/>
            <person name="Schmidheini T."/>
            <person name="Schreer A."/>
            <person name="Skala J."/>
            <person name="Souciet J.-L."/>
            <person name="Steensma H.Y."/>
            <person name="Talla E."/>
            <person name="Thierry A."/>
            <person name="Vandenbol M."/>
            <person name="van der Aart Q.J.M."/>
            <person name="Van Dyck L."/>
            <person name="Vanoni M."/>
            <person name="Verhasselt P."/>
            <person name="Voet M."/>
            <person name="Volckaert G."/>
            <person name="Wambutt R."/>
            <person name="Watson M.D."/>
            <person name="Weber N."/>
            <person name="Wedler E."/>
            <person name="Wedler H."/>
            <person name="Wipfli P."/>
            <person name="Wolf K."/>
            <person name="Wright L.F."/>
            <person name="Zaccaria P."/>
            <person name="Zimmermann M."/>
            <person name="Zollner A."/>
            <person name="Kleine K."/>
        </authorList>
    </citation>
    <scope>NUCLEOTIDE SEQUENCE [LARGE SCALE GENOMIC DNA]</scope>
    <source>
        <strain>ATCC 204508 / S288c</strain>
    </source>
</reference>
<reference key="4">
    <citation type="journal article" date="2014" name="G3 (Bethesda)">
        <title>The reference genome sequence of Saccharomyces cerevisiae: Then and now.</title>
        <authorList>
            <person name="Engel S.R."/>
            <person name="Dietrich F.S."/>
            <person name="Fisk D.G."/>
            <person name="Binkley G."/>
            <person name="Balakrishnan R."/>
            <person name="Costanzo M.C."/>
            <person name="Dwight S.S."/>
            <person name="Hitz B.C."/>
            <person name="Karra K."/>
            <person name="Nash R.S."/>
            <person name="Weng S."/>
            <person name="Wong E.D."/>
            <person name="Lloyd P."/>
            <person name="Skrzypek M.S."/>
            <person name="Miyasato S.R."/>
            <person name="Simison M."/>
            <person name="Cherry J.M."/>
        </authorList>
    </citation>
    <scope>GENOME REANNOTATION</scope>
    <source>
        <strain>ATCC 204508 / S288c</strain>
    </source>
</reference>
<reference key="5">
    <citation type="journal article" date="1993" name="J. Biol. Chem.">
        <title>COX3 mRNA-specific translational activator proteins are associated with the inner mitochondrial membrane in Saccharomyces cerevisiae.</title>
        <authorList>
            <person name="McMullin T.W."/>
            <person name="Fox T.D."/>
        </authorList>
    </citation>
    <scope>PROTEIN SEQUENCE OF 1-16</scope>
    <scope>SUBCELLULAR LOCATION</scope>
</reference>
<reference key="6">
    <citation type="journal article" date="1989" name="EMBO J.">
        <title>Disruption of the yeast nuclear PET54 gene blocks excision of mitochondrial intron aI5 beta from pre-mRNA for cytochrome c oxidase subunit I.</title>
        <authorList>
            <person name="Valencik M.L."/>
            <person name="Kloeckener-Gruissem B."/>
            <person name="Poyton R.O."/>
            <person name="McEwen J.E."/>
        </authorList>
    </citation>
    <scope>FUNCTION</scope>
</reference>
<reference key="7">
    <citation type="journal article" date="2003" name="Nature">
        <title>Global analysis of protein expression in yeast.</title>
        <authorList>
            <person name="Ghaemmaghami S."/>
            <person name="Huh W.-K."/>
            <person name="Bower K."/>
            <person name="Howson R.W."/>
            <person name="Belle A."/>
            <person name="Dephoure N."/>
            <person name="O'Shea E.K."/>
            <person name="Weissman J.S."/>
        </authorList>
    </citation>
    <scope>LEVEL OF PROTEIN EXPRESSION [LARGE SCALE ANALYSIS]</scope>
</reference>
<feature type="chain" id="PRO_0000058319" description="Protein PET54">
    <location>
        <begin position="1"/>
        <end position="293"/>
    </location>
</feature>
<gene>
    <name type="primary">PET54</name>
    <name type="ordered locus">YGR222W</name>
    <name type="ORF">G8527</name>
</gene>
<sequence length="293" mass="34637">MKASSKAIKLVLDHLKSTGRVLGSVESGNSATISEKTASVNKQQQLQEKKPSVLQYRSYNPYLVKEDFLSILPENLYKKRGQFTNELDFQLMKVRDPKYFQFKDQYYLFFNDYNSLTEYIKLTKHSRINKIRVKMTPLAQPLPTLLTKLQRYSKNLYNAFRSSEQYFEGLNEKVDVSGEFTTNQLRSILDSVEEIENKSVLVWNIPTKLRSHDILNYFWFYNIRSSFKIYWDDEMKRNLRFISFENSHDAYRFKRNYHGLLAKELLTLSEKGDAADYSLEMDDSKILIEHLSE</sequence>
<organism>
    <name type="scientific">Saccharomyces cerevisiae (strain ATCC 204508 / S288c)</name>
    <name type="common">Baker's yeast</name>
    <dbReference type="NCBI Taxonomy" id="559292"/>
    <lineage>
        <taxon>Eukaryota</taxon>
        <taxon>Fungi</taxon>
        <taxon>Dikarya</taxon>
        <taxon>Ascomycota</taxon>
        <taxon>Saccharomycotina</taxon>
        <taxon>Saccharomycetes</taxon>
        <taxon>Saccharomycetales</taxon>
        <taxon>Saccharomycetaceae</taxon>
        <taxon>Saccharomyces</taxon>
    </lineage>
</organism>
<keyword id="KW-0010">Activator</keyword>
<keyword id="KW-0903">Direct protein sequencing</keyword>
<keyword id="KW-0472">Membrane</keyword>
<keyword id="KW-0496">Mitochondrion</keyword>
<keyword id="KW-0999">Mitochondrion inner membrane</keyword>
<keyword id="KW-0507">mRNA processing</keyword>
<keyword id="KW-1185">Reference proteome</keyword>
<keyword id="KW-0694">RNA-binding</keyword>
<keyword id="KW-0810">Translation regulation</keyword>
<protein>
    <recommendedName>
        <fullName>Protein PET54</fullName>
    </recommendedName>
    <alternativeName>
        <fullName>Petite colonies protein 54</fullName>
    </alternativeName>
</protein>
<proteinExistence type="evidence at protein level"/>
<dbReference type="EMBL" id="X13427">
    <property type="protein sequence ID" value="CAA31784.1"/>
    <property type="molecule type" value="Genomic_DNA"/>
</dbReference>
<dbReference type="EMBL" id="X87941">
    <property type="protein sequence ID" value="CAA61170.1"/>
    <property type="molecule type" value="Genomic_DNA"/>
</dbReference>
<dbReference type="EMBL" id="Z73007">
    <property type="protein sequence ID" value="CAA97250.1"/>
    <property type="molecule type" value="Genomic_DNA"/>
</dbReference>
<dbReference type="EMBL" id="BK006941">
    <property type="protein sequence ID" value="DAA08315.1"/>
    <property type="molecule type" value="Genomic_DNA"/>
</dbReference>
<dbReference type="PIR" id="S05778">
    <property type="entry name" value="RGBY54"/>
</dbReference>
<dbReference type="RefSeq" id="NP_011738.3">
    <property type="nucleotide sequence ID" value="NM_001181351.3"/>
</dbReference>
<dbReference type="BioGRID" id="33475">
    <property type="interactions" value="79"/>
</dbReference>
<dbReference type="DIP" id="DIP-4485N"/>
<dbReference type="FunCoup" id="P10834">
    <property type="interactions" value="71"/>
</dbReference>
<dbReference type="IntAct" id="P10834">
    <property type="interactions" value="3"/>
</dbReference>
<dbReference type="STRING" id="4932.YGR222W"/>
<dbReference type="PaxDb" id="4932-YGR222W"/>
<dbReference type="PeptideAtlas" id="P10834"/>
<dbReference type="EnsemblFungi" id="YGR222W_mRNA">
    <property type="protein sequence ID" value="YGR222W"/>
    <property type="gene ID" value="YGR222W"/>
</dbReference>
<dbReference type="GeneID" id="853137"/>
<dbReference type="KEGG" id="sce:YGR222W"/>
<dbReference type="AGR" id="SGD:S000003454"/>
<dbReference type="SGD" id="S000003454">
    <property type="gene designation" value="PET54"/>
</dbReference>
<dbReference type="VEuPathDB" id="FungiDB:YGR222W"/>
<dbReference type="eggNOG" id="ENOG502RR5W">
    <property type="taxonomic scope" value="Eukaryota"/>
</dbReference>
<dbReference type="HOGENOM" id="CLU_1066355_0_0_1"/>
<dbReference type="InParanoid" id="P10834"/>
<dbReference type="OMA" id="KHCFKLY"/>
<dbReference type="OrthoDB" id="4062764at2759"/>
<dbReference type="BioCyc" id="YEAST:G3O-30903-MONOMER"/>
<dbReference type="BioGRID-ORCS" id="853137">
    <property type="hits" value="0 hits in 10 CRISPR screens"/>
</dbReference>
<dbReference type="PRO" id="PR:P10834"/>
<dbReference type="Proteomes" id="UP000002311">
    <property type="component" value="Chromosome VII"/>
</dbReference>
<dbReference type="RNAct" id="P10834">
    <property type="molecule type" value="protein"/>
</dbReference>
<dbReference type="GO" id="GO:0005743">
    <property type="term" value="C:mitochondrial inner membrane"/>
    <property type="evidence" value="ECO:0000314"/>
    <property type="project" value="SGD"/>
</dbReference>
<dbReference type="GO" id="GO:0005759">
    <property type="term" value="C:mitochondrial matrix"/>
    <property type="evidence" value="ECO:0000314"/>
    <property type="project" value="SGD"/>
</dbReference>
<dbReference type="GO" id="GO:0005739">
    <property type="term" value="C:mitochondrion"/>
    <property type="evidence" value="ECO:0007005"/>
    <property type="project" value="SGD"/>
</dbReference>
<dbReference type="GO" id="GO:0048027">
    <property type="term" value="F:mRNA 5'-UTR binding"/>
    <property type="evidence" value="ECO:0000314"/>
    <property type="project" value="SGD"/>
</dbReference>
<dbReference type="GO" id="GO:0097157">
    <property type="term" value="F:pre-mRNA intronic binding"/>
    <property type="evidence" value="ECO:0000314"/>
    <property type="project" value="SGD"/>
</dbReference>
<dbReference type="GO" id="GO:0045182">
    <property type="term" value="F:translation regulator activity"/>
    <property type="evidence" value="ECO:0000315"/>
    <property type="project" value="SGD"/>
</dbReference>
<dbReference type="GO" id="GO:0000372">
    <property type="term" value="P:Group I intron splicing"/>
    <property type="evidence" value="ECO:0000314"/>
    <property type="project" value="SGD"/>
</dbReference>
<dbReference type="GO" id="GO:0090615">
    <property type="term" value="P:mitochondrial mRNA processing"/>
    <property type="evidence" value="ECO:0000315"/>
    <property type="project" value="SGD"/>
</dbReference>
<dbReference type="GO" id="GO:0070131">
    <property type="term" value="P:positive regulation of mitochondrial translation"/>
    <property type="evidence" value="ECO:0000315"/>
    <property type="project" value="SGD"/>
</dbReference>
<dbReference type="InterPro" id="IPR035979">
    <property type="entry name" value="RBD_domain_sf"/>
</dbReference>
<dbReference type="InterPro" id="IPR003954">
    <property type="entry name" value="RRM_dom_euk"/>
</dbReference>
<dbReference type="SMART" id="SM00361">
    <property type="entry name" value="RRM_1"/>
    <property type="match status" value="1"/>
</dbReference>
<dbReference type="SUPFAM" id="SSF54928">
    <property type="entry name" value="RNA-binding domain, RBD"/>
    <property type="match status" value="1"/>
</dbReference>
<comment type="function">
    <text evidence="2">Activator of specific mitochondrial mRNAs. PET54 is involved in the excision of intron aI5-beta from pre-mRNA for cytochrome c oxidase I (COX1) and plays a role in promoting the translation of COX3.</text>
</comment>
<comment type="subcellular location">
    <subcellularLocation>
        <location evidence="3">Mitochondrion inner membrane</location>
        <topology evidence="3">Peripheral membrane protein</topology>
    </subcellularLocation>
</comment>
<comment type="miscellaneous">
    <text evidence="1">Present with 799 molecules/cell in log phase SD medium.</text>
</comment>
<accession>P10834</accession>
<accession>D6VV04</accession>